<comment type="similarity">
    <text evidence="1">Belongs to the eukaryotic ribosomal protein eL40 family.</text>
</comment>
<name>RL40_NATPD</name>
<proteinExistence type="inferred from homology"/>
<evidence type="ECO:0000255" key="1">
    <source>
        <dbReference type="HAMAP-Rule" id="MF_00788"/>
    </source>
</evidence>
<evidence type="ECO:0000305" key="2"/>
<sequence>MASFEEAEERILDKMICMRCNARNPKRADSCRKCGYKKLRPKAKERRAA</sequence>
<organism>
    <name type="scientific">Natronomonas pharaonis (strain ATCC 35678 / DSM 2160 / CIP 103997 / JCM 8858 / NBRC 14720 / NCIMB 2260 / Gabara)</name>
    <name type="common">Halobacterium pharaonis</name>
    <dbReference type="NCBI Taxonomy" id="348780"/>
    <lineage>
        <taxon>Archaea</taxon>
        <taxon>Methanobacteriati</taxon>
        <taxon>Methanobacteriota</taxon>
        <taxon>Stenosarchaea group</taxon>
        <taxon>Halobacteria</taxon>
        <taxon>Halobacteriales</taxon>
        <taxon>Haloarculaceae</taxon>
        <taxon>Natronomonas</taxon>
    </lineage>
</organism>
<accession>Q3IUP2</accession>
<dbReference type="EMBL" id="CR936257">
    <property type="protein sequence ID" value="CAI48138.1"/>
    <property type="molecule type" value="Genomic_DNA"/>
</dbReference>
<dbReference type="RefSeq" id="WP_011321777.1">
    <property type="nucleotide sequence ID" value="NC_007426.1"/>
</dbReference>
<dbReference type="SMR" id="Q3IUP2"/>
<dbReference type="STRING" id="348780.NP_0094A"/>
<dbReference type="EnsemblBacteria" id="CAI48138">
    <property type="protein sequence ID" value="CAI48138"/>
    <property type="gene ID" value="NP_0094A"/>
</dbReference>
<dbReference type="GeneID" id="3700761"/>
<dbReference type="KEGG" id="nph:NP_0094A"/>
<dbReference type="eggNOG" id="arCOG04049">
    <property type="taxonomic scope" value="Archaea"/>
</dbReference>
<dbReference type="HOGENOM" id="CLU_205640_0_0_2"/>
<dbReference type="OrthoDB" id="45138at2157"/>
<dbReference type="Proteomes" id="UP000002698">
    <property type="component" value="Chromosome"/>
</dbReference>
<dbReference type="GO" id="GO:1990904">
    <property type="term" value="C:ribonucleoprotein complex"/>
    <property type="evidence" value="ECO:0007669"/>
    <property type="project" value="UniProtKB-KW"/>
</dbReference>
<dbReference type="GO" id="GO:0005840">
    <property type="term" value="C:ribosome"/>
    <property type="evidence" value="ECO:0007669"/>
    <property type="project" value="UniProtKB-KW"/>
</dbReference>
<dbReference type="GO" id="GO:0003735">
    <property type="term" value="F:structural constituent of ribosome"/>
    <property type="evidence" value="ECO:0007669"/>
    <property type="project" value="InterPro"/>
</dbReference>
<dbReference type="GO" id="GO:0006412">
    <property type="term" value="P:translation"/>
    <property type="evidence" value="ECO:0007669"/>
    <property type="project" value="UniProtKB-UniRule"/>
</dbReference>
<dbReference type="Gene3D" id="4.10.1060.50">
    <property type="match status" value="1"/>
</dbReference>
<dbReference type="HAMAP" id="MF_00788">
    <property type="entry name" value="Ribosomal_eL40"/>
    <property type="match status" value="1"/>
</dbReference>
<dbReference type="InterPro" id="IPR023657">
    <property type="entry name" value="Ribosomal_eL40_arc"/>
</dbReference>
<dbReference type="InterPro" id="IPR001975">
    <property type="entry name" value="Ribosomal_eL40_dom"/>
</dbReference>
<dbReference type="InterPro" id="IPR038587">
    <property type="entry name" value="Ribosomal_eL40_sf"/>
</dbReference>
<dbReference type="InterPro" id="IPR011332">
    <property type="entry name" value="Ribosomal_zn-bd"/>
</dbReference>
<dbReference type="NCBIfam" id="NF003161">
    <property type="entry name" value="PRK04136.1"/>
    <property type="match status" value="1"/>
</dbReference>
<dbReference type="PANTHER" id="PTHR39649">
    <property type="entry name" value="50S RIBOSOMAL PROTEIN L40E"/>
    <property type="match status" value="1"/>
</dbReference>
<dbReference type="PANTHER" id="PTHR39649:SF1">
    <property type="entry name" value="LARGE RIBOSOMAL SUBUNIT PROTEIN EL40"/>
    <property type="match status" value="1"/>
</dbReference>
<dbReference type="Pfam" id="PF01020">
    <property type="entry name" value="Ribosomal_L40e"/>
    <property type="match status" value="1"/>
</dbReference>
<dbReference type="SMART" id="SM01377">
    <property type="entry name" value="Ribosomal_L40e"/>
    <property type="match status" value="1"/>
</dbReference>
<dbReference type="SUPFAM" id="SSF57829">
    <property type="entry name" value="Zn-binding ribosomal proteins"/>
    <property type="match status" value="1"/>
</dbReference>
<keyword id="KW-1185">Reference proteome</keyword>
<keyword id="KW-0687">Ribonucleoprotein</keyword>
<keyword id="KW-0689">Ribosomal protein</keyword>
<gene>
    <name evidence="1" type="primary">rpl40e</name>
    <name type="ordered locus">NP_0094A</name>
</gene>
<feature type="chain" id="PRO_1000083599" description="Large ribosomal subunit protein eL40">
    <location>
        <begin position="1"/>
        <end position="49"/>
    </location>
</feature>
<protein>
    <recommendedName>
        <fullName evidence="1">Large ribosomal subunit protein eL40</fullName>
    </recommendedName>
    <alternativeName>
        <fullName evidence="2">50S ribosomal protein L40e</fullName>
    </alternativeName>
</protein>
<reference key="1">
    <citation type="journal article" date="2005" name="Genome Res.">
        <title>Living with two extremes: conclusions from the genome sequence of Natronomonas pharaonis.</title>
        <authorList>
            <person name="Falb M."/>
            <person name="Pfeiffer F."/>
            <person name="Palm P."/>
            <person name="Rodewald K."/>
            <person name="Hickmann V."/>
            <person name="Tittor J."/>
            <person name="Oesterhelt D."/>
        </authorList>
    </citation>
    <scope>NUCLEOTIDE SEQUENCE [LARGE SCALE GENOMIC DNA]</scope>
    <source>
        <strain>ATCC 35678 / DSM 2160 / CIP 103997 / JCM 8858 / NBRC 14720 / NCIMB 2260 / Gabara</strain>
    </source>
</reference>